<proteinExistence type="inferred from homology"/>
<accession>B6I6K4</accession>
<dbReference type="EC" id="2.1.1.186" evidence="1"/>
<dbReference type="EMBL" id="AP009240">
    <property type="protein sequence ID" value="BAG78590.1"/>
    <property type="molecule type" value="Genomic_DNA"/>
</dbReference>
<dbReference type="RefSeq" id="WP_001045520.1">
    <property type="nucleotide sequence ID" value="NC_011415.1"/>
</dbReference>
<dbReference type="SMR" id="B6I6K4"/>
<dbReference type="GeneID" id="75203803"/>
<dbReference type="KEGG" id="ecy:ECSE_3066"/>
<dbReference type="HOGENOM" id="CLU_043780_0_0_6"/>
<dbReference type="Proteomes" id="UP000008199">
    <property type="component" value="Chromosome"/>
</dbReference>
<dbReference type="GO" id="GO:0005737">
    <property type="term" value="C:cytoplasm"/>
    <property type="evidence" value="ECO:0007669"/>
    <property type="project" value="UniProtKB-SubCell"/>
</dbReference>
<dbReference type="GO" id="GO:0008757">
    <property type="term" value="F:S-adenosylmethionine-dependent methyltransferase activity"/>
    <property type="evidence" value="ECO:0007669"/>
    <property type="project" value="UniProtKB-UniRule"/>
</dbReference>
<dbReference type="GO" id="GO:0032259">
    <property type="term" value="P:methylation"/>
    <property type="evidence" value="ECO:0007669"/>
    <property type="project" value="UniProtKB-KW"/>
</dbReference>
<dbReference type="GO" id="GO:0006364">
    <property type="term" value="P:rRNA processing"/>
    <property type="evidence" value="ECO:0007669"/>
    <property type="project" value="UniProtKB-UniRule"/>
</dbReference>
<dbReference type="FunFam" id="3.30.2300.20:FF:000001">
    <property type="entry name" value="Ribosomal RNA large subunit methyltransferase M"/>
    <property type="match status" value="1"/>
</dbReference>
<dbReference type="FunFam" id="3.30.70.2810:FF:000001">
    <property type="entry name" value="Ribosomal RNA large subunit methyltransferase M"/>
    <property type="match status" value="1"/>
</dbReference>
<dbReference type="FunFam" id="3.40.50.150:FF:000020">
    <property type="entry name" value="Ribosomal RNA large subunit methyltransferase M"/>
    <property type="match status" value="1"/>
</dbReference>
<dbReference type="Gene3D" id="3.30.2300.20">
    <property type="match status" value="1"/>
</dbReference>
<dbReference type="Gene3D" id="3.30.70.2810">
    <property type="match status" value="1"/>
</dbReference>
<dbReference type="Gene3D" id="3.40.50.150">
    <property type="entry name" value="Vaccinia Virus protein VP39"/>
    <property type="match status" value="1"/>
</dbReference>
<dbReference type="HAMAP" id="MF_01551">
    <property type="entry name" value="23SrRNA_methyltr_M"/>
    <property type="match status" value="1"/>
</dbReference>
<dbReference type="InterPro" id="IPR040739">
    <property type="entry name" value="RlmM_FDX"/>
</dbReference>
<dbReference type="InterPro" id="IPR048646">
    <property type="entry name" value="RlmM_THUMP-like"/>
</dbReference>
<dbReference type="InterPro" id="IPR002877">
    <property type="entry name" value="RNA_MeTrfase_FtsJ_dom"/>
</dbReference>
<dbReference type="InterPro" id="IPR011224">
    <property type="entry name" value="rRNA_MeTrfase_M"/>
</dbReference>
<dbReference type="InterPro" id="IPR029063">
    <property type="entry name" value="SAM-dependent_MTases_sf"/>
</dbReference>
<dbReference type="NCBIfam" id="NF008734">
    <property type="entry name" value="PRK11760.1"/>
    <property type="match status" value="1"/>
</dbReference>
<dbReference type="PANTHER" id="PTHR37524">
    <property type="entry name" value="RIBOSOMAL RNA LARGE SUBUNIT METHYLTRANSFERASE M"/>
    <property type="match status" value="1"/>
</dbReference>
<dbReference type="PANTHER" id="PTHR37524:SF2">
    <property type="entry name" value="RIBOSOMAL RNA METHYLTRANSFERASE FTSJ DOMAIN-CONTAINING PROTEIN"/>
    <property type="match status" value="1"/>
</dbReference>
<dbReference type="Pfam" id="PF01728">
    <property type="entry name" value="FtsJ"/>
    <property type="match status" value="1"/>
</dbReference>
<dbReference type="Pfam" id="PF18125">
    <property type="entry name" value="RlmM_FDX"/>
    <property type="match status" value="1"/>
</dbReference>
<dbReference type="Pfam" id="PF21239">
    <property type="entry name" value="RLMM_N"/>
    <property type="match status" value="1"/>
</dbReference>
<dbReference type="PIRSF" id="PIRSF028774">
    <property type="entry name" value="UCP028774"/>
    <property type="match status" value="1"/>
</dbReference>
<dbReference type="SUPFAM" id="SSF53335">
    <property type="entry name" value="S-adenosyl-L-methionine-dependent methyltransferases"/>
    <property type="match status" value="1"/>
</dbReference>
<name>RLMM_ECOSE</name>
<organism>
    <name type="scientific">Escherichia coli (strain SE11)</name>
    <dbReference type="NCBI Taxonomy" id="409438"/>
    <lineage>
        <taxon>Bacteria</taxon>
        <taxon>Pseudomonadati</taxon>
        <taxon>Pseudomonadota</taxon>
        <taxon>Gammaproteobacteria</taxon>
        <taxon>Enterobacterales</taxon>
        <taxon>Enterobacteriaceae</taxon>
        <taxon>Escherichia</taxon>
    </lineage>
</organism>
<protein>
    <recommendedName>
        <fullName evidence="1">Ribosomal RNA large subunit methyltransferase M</fullName>
        <ecNumber evidence="1">2.1.1.186</ecNumber>
    </recommendedName>
    <alternativeName>
        <fullName evidence="1">23S rRNA (cytidine2498-2'-O)-methyltransferase</fullName>
    </alternativeName>
    <alternativeName>
        <fullName evidence="1">23S rRNA 2'-O-ribose methyltransferase RlmM</fullName>
    </alternativeName>
</protein>
<comment type="function">
    <text evidence="1">Catalyzes the 2'-O-methylation at nucleotide C2498 in 23S rRNA.</text>
</comment>
<comment type="catalytic activity">
    <reaction evidence="1">
        <text>cytidine(2498) in 23S rRNA + S-adenosyl-L-methionine = 2'-O-methylcytidine(2498) in 23S rRNA + S-adenosyl-L-homocysteine + H(+)</text>
        <dbReference type="Rhea" id="RHEA:42788"/>
        <dbReference type="Rhea" id="RHEA-COMP:10244"/>
        <dbReference type="Rhea" id="RHEA-COMP:10245"/>
        <dbReference type="ChEBI" id="CHEBI:15378"/>
        <dbReference type="ChEBI" id="CHEBI:57856"/>
        <dbReference type="ChEBI" id="CHEBI:59789"/>
        <dbReference type="ChEBI" id="CHEBI:74495"/>
        <dbReference type="ChEBI" id="CHEBI:82748"/>
        <dbReference type="EC" id="2.1.1.186"/>
    </reaction>
</comment>
<comment type="subunit">
    <text evidence="1">Monomer.</text>
</comment>
<comment type="subcellular location">
    <subcellularLocation>
        <location evidence="1">Cytoplasm</location>
    </subcellularLocation>
</comment>
<comment type="similarity">
    <text evidence="1">Belongs to the class I-like SAM-binding methyltransferase superfamily. RNA methyltransferase RlmE family. RlmM subfamily.</text>
</comment>
<reference key="1">
    <citation type="journal article" date="2008" name="DNA Res.">
        <title>Complete genome sequence and comparative analysis of the wild-type commensal Escherichia coli strain SE11 isolated from a healthy adult.</title>
        <authorList>
            <person name="Oshima K."/>
            <person name="Toh H."/>
            <person name="Ogura Y."/>
            <person name="Sasamoto H."/>
            <person name="Morita H."/>
            <person name="Park S.-H."/>
            <person name="Ooka T."/>
            <person name="Iyoda S."/>
            <person name="Taylor T.D."/>
            <person name="Hayashi T."/>
            <person name="Itoh K."/>
            <person name="Hattori M."/>
        </authorList>
    </citation>
    <scope>NUCLEOTIDE SEQUENCE [LARGE SCALE GENOMIC DNA]</scope>
    <source>
        <strain>SE11</strain>
    </source>
</reference>
<evidence type="ECO:0000255" key="1">
    <source>
        <dbReference type="HAMAP-Rule" id="MF_01551"/>
    </source>
</evidence>
<sequence length="366" mass="41905">MNKVVLLCRPGFEKECAAEITDKAGQREIFGFARVKENAGYVIYECYQPDDGDKLIRELPFSSLIFARQWFVVGELLQHLPPEDRITPIVGMLQGVVEKGGELRVEVADTNESKELLKFCRKFTVPLRAALRDAGVLANYETPKRPVVHVFFIAPGCCYTGYSYSNNNSPFYMGIPRLKFPADAPSRSTLKLEEAFHVFIPADEWDERLANGMWAVDLGACPGGWTYQLVKRNMWVYSVDNGPMAQSLMDTGQVTWLREDGFKFRPTRSNISWMVCDMVEKPAKVAALMAQWLVNGWCRETIFNLKLPMKKRYEEVSHNLAYIQAQLDEHGINAQIQARQLYHDREEVTVHVRRIWAAVGGRRDER</sequence>
<keyword id="KW-0963">Cytoplasm</keyword>
<keyword id="KW-0489">Methyltransferase</keyword>
<keyword id="KW-0698">rRNA processing</keyword>
<keyword id="KW-0949">S-adenosyl-L-methionine</keyword>
<keyword id="KW-0808">Transferase</keyword>
<feature type="chain" id="PRO_1000201513" description="Ribosomal RNA large subunit methyltransferase M">
    <location>
        <begin position="1"/>
        <end position="366"/>
    </location>
</feature>
<feature type="active site" description="Proton acceptor" evidence="1">
    <location>
        <position position="306"/>
    </location>
</feature>
<feature type="binding site" evidence="1">
    <location>
        <position position="188"/>
    </location>
    <ligand>
        <name>S-adenosyl-L-methionine</name>
        <dbReference type="ChEBI" id="CHEBI:59789"/>
    </ligand>
</feature>
<feature type="binding site" evidence="1">
    <location>
        <begin position="221"/>
        <end position="224"/>
    </location>
    <ligand>
        <name>S-adenosyl-L-methionine</name>
        <dbReference type="ChEBI" id="CHEBI:59789"/>
    </ligand>
</feature>
<feature type="binding site" evidence="1">
    <location>
        <position position="240"/>
    </location>
    <ligand>
        <name>S-adenosyl-L-methionine</name>
        <dbReference type="ChEBI" id="CHEBI:59789"/>
    </ligand>
</feature>
<feature type="binding site" evidence="1">
    <location>
        <position position="260"/>
    </location>
    <ligand>
        <name>S-adenosyl-L-methionine</name>
        <dbReference type="ChEBI" id="CHEBI:59789"/>
    </ligand>
</feature>
<feature type="binding site" evidence="1">
    <location>
        <position position="277"/>
    </location>
    <ligand>
        <name>S-adenosyl-L-methionine</name>
        <dbReference type="ChEBI" id="CHEBI:59789"/>
    </ligand>
</feature>
<gene>
    <name evidence="1" type="primary">rlmM</name>
    <name type="ordered locus">ECSE_3066</name>
</gene>